<keyword id="KW-0002">3D-structure</keyword>
<keyword id="KW-0007">Acetylation</keyword>
<keyword id="KW-0903">Direct protein sequencing</keyword>
<keyword id="KW-0249">Electron transport</keyword>
<keyword id="KW-0274">FAD</keyword>
<keyword id="KW-0285">Flavoprotein</keyword>
<keyword id="KW-0496">Mitochondrion</keyword>
<keyword id="KW-0597">Phosphoprotein</keyword>
<keyword id="KW-1185">Reference proteome</keyword>
<keyword id="KW-0679">Respiratory chain</keyword>
<keyword id="KW-0809">Transit peptide</keyword>
<keyword id="KW-0813">Transport</keyword>
<reference key="1">
    <citation type="journal article" date="1991" name="Biochem. J.">
        <title>NADH:ubiquinone oxidoreductase from bovine heart mitochondria. cDNA sequences of the import precursors of the nuclear-encoded 39 kDa and 42 kDa subunits.</title>
        <authorList>
            <person name="Fearnley I.M."/>
            <person name="Finel M."/>
            <person name="Skehel J.M."/>
            <person name="Walker J.E."/>
        </authorList>
    </citation>
    <scope>NUCLEOTIDE SEQUENCE [MRNA]</scope>
    <scope>PARTIAL PROTEIN SEQUENCE</scope>
    <source>
        <tissue>Heart</tissue>
    </source>
</reference>
<reference key="2">
    <citation type="journal article" date="2000" name="Biochemistry">
        <title>Resolution of the membrane domain of bovine complex I into subcomplexes: implications for the structural organization of the enzyme.</title>
        <authorList>
            <person name="Sazanov L.A."/>
            <person name="Peak-Chew S.Y."/>
            <person name="Fearnley I.M."/>
            <person name="Walker J.E."/>
        </authorList>
    </citation>
    <scope>PARTIAL PROTEIN SEQUENCE</scope>
    <scope>SUBUNIT</scope>
    <scope>IDENTIFICATION IN COMPLEX I</scope>
    <scope>SUBCELLULAR LOCATION</scope>
</reference>
<reference key="3">
    <citation type="journal article" date="2008" name="Anal. Biochem.">
        <title>Subunit analysis of bovine heart complex I by reversed-phase high-performance liquid chromatography, electrospray ionization-tandem mass spectrometry, and matrix-assisted laser desorption/ionization-time-of-flight mass spectrometry.</title>
        <authorList>
            <person name="Lemma-Gray P."/>
            <person name="Valusova E."/>
            <person name="Carroll C.A."/>
            <person name="Weintraub S.T."/>
            <person name="Musatov A."/>
            <person name="Robinson N.C."/>
        </authorList>
    </citation>
    <scope>SUBUNIT</scope>
    <scope>IDENTIFICATION IN COMPLEX I</scope>
    <scope>SUBCELLULAR LOCATION</scope>
</reference>
<organism>
    <name type="scientific">Bos taurus</name>
    <name type="common">Bovine</name>
    <dbReference type="NCBI Taxonomy" id="9913"/>
    <lineage>
        <taxon>Eukaryota</taxon>
        <taxon>Metazoa</taxon>
        <taxon>Chordata</taxon>
        <taxon>Craniata</taxon>
        <taxon>Vertebrata</taxon>
        <taxon>Euteleostomi</taxon>
        <taxon>Mammalia</taxon>
        <taxon>Eutheria</taxon>
        <taxon>Laurasiatheria</taxon>
        <taxon>Artiodactyla</taxon>
        <taxon>Ruminantia</taxon>
        <taxon>Pecora</taxon>
        <taxon>Bovidae</taxon>
        <taxon>Bovinae</taxon>
        <taxon>Bos</taxon>
    </lineage>
</organism>
<sequence length="343" mass="39264">MALRLLRLVPPRVGGIHTSVQFKLQYGPLAYILGEKATKKMTEKSKLITVDGNICSGKSKLAKEIAEKLGLKHFPEAGIHYVDSTTGDGKPLPVQFSGNCSLEKFYDDPKSNDGNSYRLQAWLYASRLLQYADALEHLLSTGQGVVLERSIYSDFVFLEAMYRQGFIRKQCVDHYNQVKKVTICEYLPPHVVVYVDVPVPEVQSRIQKKGNPHEMKITSAYLQDIENAYKGTFLPEMSEKCEVLQYSAWEAQDAEKVVEDIEYLKYDKGPWLDQNDRNLHKLRMLVQDKLEVLNYTSIPVFLPEVTVGAHQSDQVFQEFTELPGRKYRAGYNEDVGDKWIWLK</sequence>
<comment type="function">
    <text evidence="1">Accessory subunit of the mitochondrial membrane respiratory chain NADH dehydrogenase (Complex I), that is believed not to be involved in catalysis. Complex I functions in the transfer of electrons from NADH to the respiratory chain. The immediate electron acceptor for the enzyme is believed to be ubiquinone.</text>
</comment>
<comment type="cofactor">
    <cofactor>
        <name>FAD</name>
        <dbReference type="ChEBI" id="CHEBI:57692"/>
    </cofactor>
    <text>Binds 1 FAD per subunit.</text>
</comment>
<comment type="subunit">
    <text evidence="3 5">Complex I is composed of 45 different subunits. This a component of the hydrophobic protein fraction.</text>
</comment>
<comment type="subcellular location">
    <subcellularLocation>
        <location evidence="7 8">Mitochondrion matrix</location>
    </subcellularLocation>
</comment>
<comment type="PTM">
    <text evidence="2">Phosphorylation at Ser-238 by PINK1 is required for the binding and/or reduction of the complex I substrate ubiquinone.</text>
</comment>
<comment type="similarity">
    <text evidence="6">Belongs to the complex I NDUFA10 subunit family.</text>
</comment>
<protein>
    <recommendedName>
        <fullName>NADH dehydrogenase [ubiquinone] 1 alpha subcomplex subunit 10, mitochondrial</fullName>
    </recommendedName>
    <alternativeName>
        <fullName>Complex I-42kD</fullName>
        <shortName>CI-42kD</shortName>
    </alternativeName>
    <alternativeName>
        <fullName>NADH-ubiquinone oxidoreductase 42 kDa subunit</fullName>
    </alternativeName>
</protein>
<gene>
    <name type="primary">NDUFA10</name>
</gene>
<evidence type="ECO:0000250" key="1">
    <source>
        <dbReference type="UniProtKB" id="O95299"/>
    </source>
</evidence>
<evidence type="ECO:0000250" key="2">
    <source>
        <dbReference type="UniProtKB" id="Q99LC3"/>
    </source>
</evidence>
<evidence type="ECO:0000269" key="3">
    <source>
    </source>
</evidence>
<evidence type="ECO:0000269" key="4">
    <source>
    </source>
</evidence>
<evidence type="ECO:0000269" key="5">
    <source>
    </source>
</evidence>
<evidence type="ECO:0000305" key="6"/>
<evidence type="ECO:0000305" key="7">
    <source>
    </source>
</evidence>
<evidence type="ECO:0000305" key="8">
    <source>
    </source>
</evidence>
<evidence type="ECO:0007829" key="9">
    <source>
        <dbReference type="PDB" id="7QSM"/>
    </source>
</evidence>
<name>NDUAA_BOVIN</name>
<dbReference type="EMBL" id="X59419">
    <property type="protein sequence ID" value="CAA42054.1"/>
    <property type="molecule type" value="mRNA"/>
</dbReference>
<dbReference type="PIR" id="S17677">
    <property type="entry name" value="S17677"/>
</dbReference>
<dbReference type="RefSeq" id="NP_788828.1">
    <property type="nucleotide sequence ID" value="NM_176655.2"/>
</dbReference>
<dbReference type="PDB" id="5LC5">
    <property type="method" value="EM"/>
    <property type="resolution" value="4.35 A"/>
    <property type="chains" value="O=114-341"/>
</dbReference>
<dbReference type="PDB" id="5LDW">
    <property type="method" value="EM"/>
    <property type="resolution" value="4.27 A"/>
    <property type="chains" value="O=114-343"/>
</dbReference>
<dbReference type="PDB" id="5LDX">
    <property type="method" value="EM"/>
    <property type="resolution" value="5.60 A"/>
    <property type="chains" value="O=114-341"/>
</dbReference>
<dbReference type="PDB" id="5O31">
    <property type="method" value="EM"/>
    <property type="resolution" value="4.13 A"/>
    <property type="chains" value="O=24-343"/>
</dbReference>
<dbReference type="PDB" id="7DGQ">
    <property type="method" value="EM"/>
    <property type="resolution" value="5.00 A"/>
    <property type="chains" value="S=24-343"/>
</dbReference>
<dbReference type="PDB" id="7DGR">
    <property type="method" value="EM"/>
    <property type="resolution" value="4.60 A"/>
    <property type="chains" value="S=24-343"/>
</dbReference>
<dbReference type="PDB" id="7DGS">
    <property type="method" value="EM"/>
    <property type="resolution" value="7.80 A"/>
    <property type="chains" value="S=24-343"/>
</dbReference>
<dbReference type="PDB" id="7DGZ">
    <property type="method" value="EM"/>
    <property type="resolution" value="3.80 A"/>
    <property type="chains" value="S=24-343"/>
</dbReference>
<dbReference type="PDB" id="7DH0">
    <property type="method" value="EM"/>
    <property type="resolution" value="4.20 A"/>
    <property type="chains" value="S=24-343"/>
</dbReference>
<dbReference type="PDB" id="7DKF">
    <property type="method" value="EM"/>
    <property type="resolution" value="8.30 A"/>
    <property type="chains" value="S2=24-343"/>
</dbReference>
<dbReference type="PDB" id="7QSD">
    <property type="method" value="EM"/>
    <property type="resolution" value="3.10 A"/>
    <property type="chains" value="O=1-343"/>
</dbReference>
<dbReference type="PDB" id="7QSK">
    <property type="method" value="EM"/>
    <property type="resolution" value="2.84 A"/>
    <property type="chains" value="O=1-343"/>
</dbReference>
<dbReference type="PDB" id="7QSL">
    <property type="method" value="EM"/>
    <property type="resolution" value="2.76 A"/>
    <property type="chains" value="O=1-343"/>
</dbReference>
<dbReference type="PDB" id="7QSM">
    <property type="method" value="EM"/>
    <property type="resolution" value="2.30 A"/>
    <property type="chains" value="O=1-343"/>
</dbReference>
<dbReference type="PDB" id="7QSN">
    <property type="method" value="EM"/>
    <property type="resolution" value="2.81 A"/>
    <property type="chains" value="O=1-343"/>
</dbReference>
<dbReference type="PDB" id="7QSO">
    <property type="method" value="EM"/>
    <property type="resolution" value="3.02 A"/>
    <property type="chains" value="O=1-343"/>
</dbReference>
<dbReference type="PDB" id="7R41">
    <property type="method" value="EM"/>
    <property type="resolution" value="2.30 A"/>
    <property type="chains" value="O=1-343"/>
</dbReference>
<dbReference type="PDB" id="7R42">
    <property type="method" value="EM"/>
    <property type="resolution" value="2.30 A"/>
    <property type="chains" value="O=1-343"/>
</dbReference>
<dbReference type="PDB" id="7R43">
    <property type="method" value="EM"/>
    <property type="resolution" value="2.40 A"/>
    <property type="chains" value="O=1-343"/>
</dbReference>
<dbReference type="PDB" id="7R44">
    <property type="method" value="EM"/>
    <property type="resolution" value="2.40 A"/>
    <property type="chains" value="O=1-343"/>
</dbReference>
<dbReference type="PDB" id="7R45">
    <property type="method" value="EM"/>
    <property type="resolution" value="2.40 A"/>
    <property type="chains" value="O=1-343"/>
</dbReference>
<dbReference type="PDB" id="7R46">
    <property type="method" value="EM"/>
    <property type="resolution" value="2.40 A"/>
    <property type="chains" value="O=1-343"/>
</dbReference>
<dbReference type="PDB" id="7R47">
    <property type="method" value="EM"/>
    <property type="resolution" value="2.30 A"/>
    <property type="chains" value="O=1-343"/>
</dbReference>
<dbReference type="PDB" id="7R48">
    <property type="method" value="EM"/>
    <property type="resolution" value="2.30 A"/>
    <property type="chains" value="O=1-343"/>
</dbReference>
<dbReference type="PDB" id="7R4C">
    <property type="method" value="EM"/>
    <property type="resolution" value="2.30 A"/>
    <property type="chains" value="O=1-343"/>
</dbReference>
<dbReference type="PDB" id="7R4D">
    <property type="method" value="EM"/>
    <property type="resolution" value="2.30 A"/>
    <property type="chains" value="O=1-343"/>
</dbReference>
<dbReference type="PDB" id="7R4F">
    <property type="method" value="EM"/>
    <property type="resolution" value="2.40 A"/>
    <property type="chains" value="O=1-343"/>
</dbReference>
<dbReference type="PDB" id="7R4G">
    <property type="method" value="EM"/>
    <property type="resolution" value="2.50 A"/>
    <property type="chains" value="O=1-343"/>
</dbReference>
<dbReference type="PDB" id="8Q0A">
    <property type="method" value="EM"/>
    <property type="resolution" value="3.10 A"/>
    <property type="chains" value="O=1-343"/>
</dbReference>
<dbReference type="PDB" id="8Q0F">
    <property type="method" value="EM"/>
    <property type="resolution" value="3.10 A"/>
    <property type="chains" value="O=1-343"/>
</dbReference>
<dbReference type="PDB" id="8Q0J">
    <property type="method" value="EM"/>
    <property type="resolution" value="3.80 A"/>
    <property type="chains" value="O=1-343"/>
</dbReference>
<dbReference type="PDB" id="8Q0M">
    <property type="method" value="EM"/>
    <property type="resolution" value="3.10 A"/>
    <property type="chains" value="O=1-343"/>
</dbReference>
<dbReference type="PDB" id="8Q0O">
    <property type="method" value="EM"/>
    <property type="resolution" value="3.10 A"/>
    <property type="chains" value="O=1-343"/>
</dbReference>
<dbReference type="PDB" id="8Q0Q">
    <property type="method" value="EM"/>
    <property type="resolution" value="3.60 A"/>
    <property type="chains" value="O=1-343"/>
</dbReference>
<dbReference type="PDB" id="8Q1P">
    <property type="method" value="EM"/>
    <property type="resolution" value="2.90 A"/>
    <property type="chains" value="O=1-343"/>
</dbReference>
<dbReference type="PDB" id="8Q1U">
    <property type="method" value="EM"/>
    <property type="resolution" value="3.30 A"/>
    <property type="chains" value="O=1-343"/>
</dbReference>
<dbReference type="PDB" id="8Q1Y">
    <property type="method" value="EM"/>
    <property type="resolution" value="2.60 A"/>
    <property type="chains" value="O=1-343"/>
</dbReference>
<dbReference type="PDB" id="8Q25">
    <property type="method" value="EM"/>
    <property type="resolution" value="2.80 A"/>
    <property type="chains" value="O=1-343"/>
</dbReference>
<dbReference type="PDB" id="8Q45">
    <property type="method" value="EM"/>
    <property type="resolution" value="2.70 A"/>
    <property type="chains" value="O=1-343"/>
</dbReference>
<dbReference type="PDB" id="8Q46">
    <property type="method" value="EM"/>
    <property type="resolution" value="2.60 A"/>
    <property type="chains" value="O=1-343"/>
</dbReference>
<dbReference type="PDB" id="8Q47">
    <property type="method" value="EM"/>
    <property type="resolution" value="2.90 A"/>
    <property type="chains" value="O=1-343"/>
</dbReference>
<dbReference type="PDB" id="8Q48">
    <property type="method" value="EM"/>
    <property type="resolution" value="2.50 A"/>
    <property type="chains" value="O=1-343"/>
</dbReference>
<dbReference type="PDB" id="8Q49">
    <property type="method" value="EM"/>
    <property type="resolution" value="2.60 A"/>
    <property type="chains" value="O=1-343"/>
</dbReference>
<dbReference type="PDB" id="8Q4A">
    <property type="method" value="EM"/>
    <property type="resolution" value="2.60 A"/>
    <property type="chains" value="O=1-343"/>
</dbReference>
<dbReference type="PDBsum" id="5LC5"/>
<dbReference type="PDBsum" id="5LDW"/>
<dbReference type="PDBsum" id="5LDX"/>
<dbReference type="PDBsum" id="5O31"/>
<dbReference type="PDBsum" id="7DGQ"/>
<dbReference type="PDBsum" id="7DGR"/>
<dbReference type="PDBsum" id="7DGS"/>
<dbReference type="PDBsum" id="7DGZ"/>
<dbReference type="PDBsum" id="7DH0"/>
<dbReference type="PDBsum" id="7DKF"/>
<dbReference type="PDBsum" id="7QSD"/>
<dbReference type="PDBsum" id="7QSK"/>
<dbReference type="PDBsum" id="7QSL"/>
<dbReference type="PDBsum" id="7QSM"/>
<dbReference type="PDBsum" id="7QSN"/>
<dbReference type="PDBsum" id="7QSO"/>
<dbReference type="PDBsum" id="7R41"/>
<dbReference type="PDBsum" id="7R42"/>
<dbReference type="PDBsum" id="7R43"/>
<dbReference type="PDBsum" id="7R44"/>
<dbReference type="PDBsum" id="7R45"/>
<dbReference type="PDBsum" id="7R46"/>
<dbReference type="PDBsum" id="7R47"/>
<dbReference type="PDBsum" id="7R48"/>
<dbReference type="PDBsum" id="7R4C"/>
<dbReference type="PDBsum" id="7R4D"/>
<dbReference type="PDBsum" id="7R4F"/>
<dbReference type="PDBsum" id="7R4G"/>
<dbReference type="PDBsum" id="8Q0A"/>
<dbReference type="PDBsum" id="8Q0F"/>
<dbReference type="PDBsum" id="8Q0J"/>
<dbReference type="PDBsum" id="8Q0M"/>
<dbReference type="PDBsum" id="8Q0O"/>
<dbReference type="PDBsum" id="8Q0Q"/>
<dbReference type="PDBsum" id="8Q1P"/>
<dbReference type="PDBsum" id="8Q1U"/>
<dbReference type="PDBsum" id="8Q1Y"/>
<dbReference type="PDBsum" id="8Q25"/>
<dbReference type="PDBsum" id="8Q45"/>
<dbReference type="PDBsum" id="8Q46"/>
<dbReference type="PDBsum" id="8Q47"/>
<dbReference type="PDBsum" id="8Q48"/>
<dbReference type="PDBsum" id="8Q49"/>
<dbReference type="PDBsum" id="8Q4A"/>
<dbReference type="EMDB" id="EMD-14127"/>
<dbReference type="EMDB" id="EMD-14132"/>
<dbReference type="EMDB" id="EMD-14133"/>
<dbReference type="EMDB" id="EMD-14134"/>
<dbReference type="EMDB" id="EMD-14139"/>
<dbReference type="EMDB" id="EMD-14140"/>
<dbReference type="EMDB" id="EMD-14251"/>
<dbReference type="EMDB" id="EMD-14256"/>
<dbReference type="EMDB" id="EMD-14261"/>
<dbReference type="EMDB" id="EMD-14266"/>
<dbReference type="EMDB" id="EMD-14272"/>
<dbReference type="EMDB" id="EMD-14277"/>
<dbReference type="EMDB" id="EMD-14282"/>
<dbReference type="EMDB" id="EMD-14287"/>
<dbReference type="EMDB" id="EMD-14292"/>
<dbReference type="EMDB" id="EMD-14297"/>
<dbReference type="EMDB" id="EMD-14302"/>
<dbReference type="EMDB" id="EMD-14307"/>
<dbReference type="EMDB" id="EMD-18051"/>
<dbReference type="EMDB" id="EMD-18052"/>
<dbReference type="EMDB" id="EMD-18054"/>
<dbReference type="EMDB" id="EMD-18055"/>
<dbReference type="EMDB" id="EMD-18057"/>
<dbReference type="EMDB" id="EMD-18059"/>
<dbReference type="EMDB" id="EMD-18066"/>
<dbReference type="EMDB" id="EMD-18067"/>
<dbReference type="EMDB" id="EMD-18068"/>
<dbReference type="EMDB" id="EMD-18069"/>
<dbReference type="EMDB" id="EMD-18138"/>
<dbReference type="EMDB" id="EMD-18139"/>
<dbReference type="EMDB" id="EMD-18140"/>
<dbReference type="EMDB" id="EMD-18141"/>
<dbReference type="EMDB" id="EMD-18142"/>
<dbReference type="EMDB" id="EMD-18143"/>
<dbReference type="EMDB" id="EMD-30673"/>
<dbReference type="EMDB" id="EMD-30674"/>
<dbReference type="EMDB" id="EMD-30675"/>
<dbReference type="EMDB" id="EMD-30676"/>
<dbReference type="EMDB" id="EMD-30677"/>
<dbReference type="EMDB" id="EMD-30706"/>
<dbReference type="EMDB" id="EMD-3731"/>
<dbReference type="EMDB" id="EMD-4032"/>
<dbReference type="EMDB" id="EMD-4040"/>
<dbReference type="EMDB" id="EMD-4041"/>
<dbReference type="SMR" id="P34942"/>
<dbReference type="CORUM" id="P34942"/>
<dbReference type="DIP" id="DIP-38803N"/>
<dbReference type="FunCoup" id="P34942">
    <property type="interactions" value="1709"/>
</dbReference>
<dbReference type="IntAct" id="P34942">
    <property type="interactions" value="1"/>
</dbReference>
<dbReference type="STRING" id="9913.ENSBTAP00000004245"/>
<dbReference type="TCDB" id="3.D.1.6.1">
    <property type="family name" value="the h+ or na+-translocating nadh dehydrogenase (ndh) family"/>
</dbReference>
<dbReference type="GlyGen" id="P34942">
    <property type="glycosylation" value="1 site, 1 O-linked glycan (1 site)"/>
</dbReference>
<dbReference type="iPTMnet" id="P34942"/>
<dbReference type="PaxDb" id="9913-ENSBTAP00000004245"/>
<dbReference type="PeptideAtlas" id="P34942"/>
<dbReference type="GeneID" id="338060"/>
<dbReference type="KEGG" id="bta:338060"/>
<dbReference type="CTD" id="4705"/>
<dbReference type="eggNOG" id="KOG3877">
    <property type="taxonomic scope" value="Eukaryota"/>
</dbReference>
<dbReference type="HOGENOM" id="CLU_050591_0_1_1"/>
<dbReference type="InParanoid" id="P34942"/>
<dbReference type="OrthoDB" id="17400at2759"/>
<dbReference type="Proteomes" id="UP000009136">
    <property type="component" value="Unplaced"/>
</dbReference>
<dbReference type="GO" id="GO:0005737">
    <property type="term" value="C:cytoplasm"/>
    <property type="evidence" value="ECO:0000318"/>
    <property type="project" value="GO_Central"/>
</dbReference>
<dbReference type="GO" id="GO:0005759">
    <property type="term" value="C:mitochondrial matrix"/>
    <property type="evidence" value="ECO:0007669"/>
    <property type="project" value="UniProtKB-SubCell"/>
</dbReference>
<dbReference type="GO" id="GO:0005739">
    <property type="term" value="C:mitochondrion"/>
    <property type="evidence" value="ECO:0000305"/>
    <property type="project" value="UniProtKB"/>
</dbReference>
<dbReference type="GO" id="GO:0045271">
    <property type="term" value="C:respiratory chain complex I"/>
    <property type="evidence" value="ECO:0000314"/>
    <property type="project" value="UniProtKB"/>
</dbReference>
<dbReference type="GO" id="GO:0006120">
    <property type="term" value="P:mitochondrial electron transport, NADH to ubiquinone"/>
    <property type="evidence" value="ECO:0000318"/>
    <property type="project" value="GO_Central"/>
</dbReference>
<dbReference type="CDD" id="cd02030">
    <property type="entry name" value="NDUO42"/>
    <property type="match status" value="1"/>
</dbReference>
<dbReference type="FunFam" id="3.40.50.300:FF:000837">
    <property type="entry name" value="NADH dehydrogenase [ubiquinone] 1 alpha subcomplex subunit 10, mitochondrial"/>
    <property type="match status" value="1"/>
</dbReference>
<dbReference type="Gene3D" id="3.40.50.300">
    <property type="entry name" value="P-loop containing nucleotide triphosphate hydrolases"/>
    <property type="match status" value="1"/>
</dbReference>
<dbReference type="InterPro" id="IPR050566">
    <property type="entry name" value="Deoxyribonucleoside_kinase"/>
</dbReference>
<dbReference type="InterPro" id="IPR031314">
    <property type="entry name" value="DNK_dom"/>
</dbReference>
<dbReference type="InterPro" id="IPR015828">
    <property type="entry name" value="NDUFA10"/>
</dbReference>
<dbReference type="InterPro" id="IPR027417">
    <property type="entry name" value="P-loop_NTPase"/>
</dbReference>
<dbReference type="PANTHER" id="PTHR10513">
    <property type="entry name" value="DEOXYNUCLEOSIDE KINASE"/>
    <property type="match status" value="1"/>
</dbReference>
<dbReference type="PANTHER" id="PTHR10513:SF15">
    <property type="entry name" value="NADH DEHYDROGENASE [UBIQUINONE] 1 ALPHA SUBCOMPLEX SUBUNIT 10, MITOCHONDRIAL"/>
    <property type="match status" value="1"/>
</dbReference>
<dbReference type="Pfam" id="PF01712">
    <property type="entry name" value="dNK"/>
    <property type="match status" value="1"/>
</dbReference>
<dbReference type="PIRSF" id="PIRSF000543">
    <property type="entry name" value="NADH_UQ_42KD"/>
    <property type="match status" value="1"/>
</dbReference>
<dbReference type="SUPFAM" id="SSF52540">
    <property type="entry name" value="P-loop containing nucleoside triphosphate hydrolases"/>
    <property type="match status" value="1"/>
</dbReference>
<accession>P34942</accession>
<proteinExistence type="evidence at protein level"/>
<feature type="transit peptide" description="Mitochondrion" evidence="4">
    <location>
        <begin position="1"/>
        <end position="23"/>
    </location>
</feature>
<feature type="chain" id="PRO_0000019987" description="NADH dehydrogenase [ubiquinone] 1 alpha subcomplex subunit 10, mitochondrial">
    <location>
        <begin position="24"/>
        <end position="343"/>
    </location>
</feature>
<feature type="modified residue" description="N6-acetyllysine; alternate" evidence="2">
    <location>
        <position position="110"/>
    </location>
</feature>
<feature type="modified residue" description="N6-succinyllysine; alternate" evidence="2">
    <location>
        <position position="110"/>
    </location>
</feature>
<feature type="modified residue" description="Phosphoserine; by PINK1" evidence="2">
    <location>
        <position position="238"/>
    </location>
</feature>
<feature type="helix" evidence="9">
    <location>
        <begin position="28"/>
        <end position="32"/>
    </location>
</feature>
<feature type="helix" evidence="9">
    <location>
        <begin position="37"/>
        <end position="40"/>
    </location>
</feature>
<feature type="strand" evidence="9">
    <location>
        <begin position="47"/>
        <end position="53"/>
    </location>
</feature>
<feature type="helix" evidence="9">
    <location>
        <begin position="58"/>
        <end position="69"/>
    </location>
</feature>
<feature type="strand" evidence="9">
    <location>
        <begin position="72"/>
        <end position="74"/>
    </location>
</feature>
<feature type="helix" evidence="9">
    <location>
        <begin position="81"/>
        <end position="85"/>
    </location>
</feature>
<feature type="helix" evidence="9">
    <location>
        <begin position="94"/>
        <end position="97"/>
    </location>
</feature>
<feature type="helix" evidence="9">
    <location>
        <begin position="102"/>
        <end position="107"/>
    </location>
</feature>
<feature type="helix" evidence="9">
    <location>
        <begin position="115"/>
        <end position="141"/>
    </location>
</feature>
<feature type="strand" evidence="9">
    <location>
        <begin position="145"/>
        <end position="149"/>
    </location>
</feature>
<feature type="turn" evidence="9">
    <location>
        <begin position="151"/>
        <end position="154"/>
    </location>
</feature>
<feature type="helix" evidence="9">
    <location>
        <begin position="155"/>
        <end position="163"/>
    </location>
</feature>
<feature type="helix" evidence="9">
    <location>
        <begin position="169"/>
        <end position="183"/>
    </location>
</feature>
<feature type="strand" evidence="9">
    <location>
        <begin position="190"/>
        <end position="196"/>
    </location>
</feature>
<feature type="helix" evidence="9">
    <location>
        <begin position="199"/>
        <end position="209"/>
    </location>
</feature>
<feature type="helix" evidence="9">
    <location>
        <begin position="214"/>
        <end position="216"/>
    </location>
</feature>
<feature type="helix" evidence="9">
    <location>
        <begin position="219"/>
        <end position="231"/>
    </location>
</feature>
<feature type="helix" evidence="9">
    <location>
        <begin position="233"/>
        <end position="238"/>
    </location>
</feature>
<feature type="strand" evidence="9">
    <location>
        <begin position="241"/>
        <end position="247"/>
    </location>
</feature>
<feature type="helix" evidence="9">
    <location>
        <begin position="248"/>
        <end position="251"/>
    </location>
</feature>
<feature type="helix" evidence="9">
    <location>
        <begin position="254"/>
        <end position="262"/>
    </location>
</feature>
<feature type="helix" evidence="9">
    <location>
        <begin position="270"/>
        <end position="273"/>
    </location>
</feature>
<feature type="helix" evidence="9">
    <location>
        <begin position="276"/>
        <end position="287"/>
    </location>
</feature>
<feature type="helix" evidence="9">
    <location>
        <begin position="289"/>
        <end position="292"/>
    </location>
</feature>
<feature type="helix" evidence="9">
    <location>
        <begin position="294"/>
        <end position="297"/>
    </location>
</feature>
<feature type="turn" evidence="9">
    <location>
        <begin position="303"/>
        <end position="305"/>
    </location>
</feature>
<feature type="helix" evidence="9">
    <location>
        <begin position="309"/>
        <end position="320"/>
    </location>
</feature>
<feature type="turn" evidence="9">
    <location>
        <begin position="323"/>
        <end position="325"/>
    </location>
</feature>
<feature type="strand" evidence="9">
    <location>
        <begin position="326"/>
        <end position="328"/>
    </location>
</feature>
<feature type="helix" evidence="9">
    <location>
        <begin position="333"/>
        <end position="335"/>
    </location>
</feature>
<feature type="helix" evidence="9">
    <location>
        <begin position="340"/>
        <end position="342"/>
    </location>
</feature>